<reference key="1">
    <citation type="submission" date="2007-11" db="EMBL/GenBank/DDBJ databases">
        <title>Complete sequence of chromosome of Shewanella baltica OS195.</title>
        <authorList>
            <consortium name="US DOE Joint Genome Institute"/>
            <person name="Copeland A."/>
            <person name="Lucas S."/>
            <person name="Lapidus A."/>
            <person name="Barry K."/>
            <person name="Glavina del Rio T."/>
            <person name="Dalin E."/>
            <person name="Tice H."/>
            <person name="Pitluck S."/>
            <person name="Chain P."/>
            <person name="Malfatti S."/>
            <person name="Shin M."/>
            <person name="Vergez L."/>
            <person name="Schmutz J."/>
            <person name="Larimer F."/>
            <person name="Land M."/>
            <person name="Hauser L."/>
            <person name="Kyrpides N."/>
            <person name="Kim E."/>
            <person name="Brettar I."/>
            <person name="Rodrigues J."/>
            <person name="Konstantinidis K."/>
            <person name="Klappenbach J."/>
            <person name="Hofle M."/>
            <person name="Tiedje J."/>
            <person name="Richardson P."/>
        </authorList>
    </citation>
    <scope>NUCLEOTIDE SEQUENCE [LARGE SCALE GENOMIC DNA]</scope>
    <source>
        <strain>OS195</strain>
    </source>
</reference>
<organism>
    <name type="scientific">Shewanella baltica (strain OS195)</name>
    <dbReference type="NCBI Taxonomy" id="399599"/>
    <lineage>
        <taxon>Bacteria</taxon>
        <taxon>Pseudomonadati</taxon>
        <taxon>Pseudomonadota</taxon>
        <taxon>Gammaproteobacteria</taxon>
        <taxon>Alteromonadales</taxon>
        <taxon>Shewanellaceae</taxon>
        <taxon>Shewanella</taxon>
    </lineage>
</organism>
<feature type="chain" id="PRO_1000080504" description="Probable protein kinase UbiB">
    <location>
        <begin position="1"/>
        <end position="549"/>
    </location>
</feature>
<feature type="transmembrane region" description="Helical" evidence="1">
    <location>
        <begin position="496"/>
        <end position="516"/>
    </location>
</feature>
<feature type="transmembrane region" description="Helical" evidence="1">
    <location>
        <begin position="520"/>
        <end position="540"/>
    </location>
</feature>
<feature type="domain" description="Protein kinase" evidence="1">
    <location>
        <begin position="123"/>
        <end position="501"/>
    </location>
</feature>
<feature type="active site" description="Proton acceptor" evidence="1">
    <location>
        <position position="287"/>
    </location>
</feature>
<feature type="binding site" evidence="1">
    <location>
        <begin position="129"/>
        <end position="137"/>
    </location>
    <ligand>
        <name>ATP</name>
        <dbReference type="ChEBI" id="CHEBI:30616"/>
    </ligand>
</feature>
<feature type="binding site" evidence="1">
    <location>
        <position position="152"/>
    </location>
    <ligand>
        <name>ATP</name>
        <dbReference type="ChEBI" id="CHEBI:30616"/>
    </ligand>
</feature>
<accession>A9KYL6</accession>
<proteinExistence type="inferred from homology"/>
<sequence length="549" mass="63364">MTLASIRRGYHVIKTLLQYGLDDVLPPKMTPWYFKLARNSLFWIRNKHKNKPGGERLKLAMQELGPVYIKLGQMLSTRRDLLSDEWASELAMLQDKVPPFDGALARQAIEAELKAPIESLFDDFNETPLASASISQVHTATLKSNGKDVVLKVLRPNVETKIQADLQLMSQTAKLIEYLLGEGNRLRPAEVIEDYRVTILGELNLKLEALNAVKLRNNFLDSDALYVPYVYEEFCYPRLMVMERIYGISVSDIAALKAQGTNFKLLAERGVELFFTQVFRDNFFHADMHPGNIFISRDHPENPYYIGLDCGIMGTLSEVDKRYLAENFLAFFNRDYHRIAQLYIESGWVSEKTDLQAFEQAIKVVCEPMFNKPLDEISFGHVLLELFRTARHFDIVVQPQLVLLEKTLLYIEGLGRQLYPQLDLWQTAKPFLEQWMADQVGPKAMFKKVSTKLPYWADKLPEFPELIYDNLKLGRKLLSSQQQMLDKYLKYQQQAHKSNYLLITSAVLLICGTLLINRDATLWTPYVCLVSGIILWFVGWRSRPKNRKF</sequence>
<keyword id="KW-0067">ATP-binding</keyword>
<keyword id="KW-0997">Cell inner membrane</keyword>
<keyword id="KW-1003">Cell membrane</keyword>
<keyword id="KW-0418">Kinase</keyword>
<keyword id="KW-0472">Membrane</keyword>
<keyword id="KW-0547">Nucleotide-binding</keyword>
<keyword id="KW-0808">Transferase</keyword>
<keyword id="KW-0812">Transmembrane</keyword>
<keyword id="KW-1133">Transmembrane helix</keyword>
<keyword id="KW-0831">Ubiquinone biosynthesis</keyword>
<dbReference type="EC" id="2.7.-.-" evidence="1"/>
<dbReference type="EMBL" id="CP000891">
    <property type="protein sequence ID" value="ABX47610.1"/>
    <property type="molecule type" value="Genomic_DNA"/>
</dbReference>
<dbReference type="RefSeq" id="WP_006087111.1">
    <property type="nucleotide sequence ID" value="NC_009997.1"/>
</dbReference>
<dbReference type="SMR" id="A9KYL6"/>
<dbReference type="GeneID" id="11770768"/>
<dbReference type="KEGG" id="sbn:Sbal195_0429"/>
<dbReference type="HOGENOM" id="CLU_006533_0_0_6"/>
<dbReference type="UniPathway" id="UPA00232"/>
<dbReference type="Proteomes" id="UP000000770">
    <property type="component" value="Chromosome"/>
</dbReference>
<dbReference type="GO" id="GO:0005886">
    <property type="term" value="C:plasma membrane"/>
    <property type="evidence" value="ECO:0007669"/>
    <property type="project" value="UniProtKB-SubCell"/>
</dbReference>
<dbReference type="GO" id="GO:0005524">
    <property type="term" value="F:ATP binding"/>
    <property type="evidence" value="ECO:0007669"/>
    <property type="project" value="UniProtKB-KW"/>
</dbReference>
<dbReference type="GO" id="GO:0004672">
    <property type="term" value="F:protein kinase activity"/>
    <property type="evidence" value="ECO:0007669"/>
    <property type="project" value="UniProtKB-UniRule"/>
</dbReference>
<dbReference type="GO" id="GO:0010795">
    <property type="term" value="P:regulation of ubiquinone biosynthetic process"/>
    <property type="evidence" value="ECO:0007669"/>
    <property type="project" value="UniProtKB-UniRule"/>
</dbReference>
<dbReference type="GO" id="GO:0006744">
    <property type="term" value="P:ubiquinone biosynthetic process"/>
    <property type="evidence" value="ECO:0007669"/>
    <property type="project" value="UniProtKB-UniPathway"/>
</dbReference>
<dbReference type="CDD" id="cd13972">
    <property type="entry name" value="UbiB"/>
    <property type="match status" value="1"/>
</dbReference>
<dbReference type="HAMAP" id="MF_00414">
    <property type="entry name" value="UbiB"/>
    <property type="match status" value="1"/>
</dbReference>
<dbReference type="InterPro" id="IPR004147">
    <property type="entry name" value="ABC1_dom"/>
</dbReference>
<dbReference type="InterPro" id="IPR011009">
    <property type="entry name" value="Kinase-like_dom_sf"/>
</dbReference>
<dbReference type="InterPro" id="IPR010232">
    <property type="entry name" value="UbiB"/>
</dbReference>
<dbReference type="InterPro" id="IPR045308">
    <property type="entry name" value="UbiB_bact"/>
</dbReference>
<dbReference type="InterPro" id="IPR050154">
    <property type="entry name" value="UbiB_kinase"/>
</dbReference>
<dbReference type="NCBIfam" id="NF003404">
    <property type="entry name" value="PRK04750.1"/>
    <property type="match status" value="1"/>
</dbReference>
<dbReference type="NCBIfam" id="TIGR01982">
    <property type="entry name" value="UbiB"/>
    <property type="match status" value="1"/>
</dbReference>
<dbReference type="PANTHER" id="PTHR10566">
    <property type="entry name" value="CHAPERONE-ACTIVITY OF BC1 COMPLEX CABC1 -RELATED"/>
    <property type="match status" value="1"/>
</dbReference>
<dbReference type="PANTHER" id="PTHR10566:SF113">
    <property type="entry name" value="PROTEIN ACTIVITY OF BC1 COMPLEX KINASE 7, CHLOROPLASTIC"/>
    <property type="match status" value="1"/>
</dbReference>
<dbReference type="Pfam" id="PF03109">
    <property type="entry name" value="ABC1"/>
    <property type="match status" value="1"/>
</dbReference>
<dbReference type="SUPFAM" id="SSF56112">
    <property type="entry name" value="Protein kinase-like (PK-like)"/>
    <property type="match status" value="1"/>
</dbReference>
<gene>
    <name evidence="1" type="primary">ubiB</name>
    <name type="ordered locus">Sbal195_0429</name>
</gene>
<protein>
    <recommendedName>
        <fullName evidence="1">Probable protein kinase UbiB</fullName>
        <ecNumber evidence="1">2.7.-.-</ecNumber>
    </recommendedName>
    <alternativeName>
        <fullName evidence="1">Ubiquinone biosynthesis protein UbiB</fullName>
    </alternativeName>
</protein>
<name>UBIB_SHEB9</name>
<comment type="function">
    <text evidence="1">Is probably a protein kinase regulator of UbiI activity which is involved in aerobic coenzyme Q (ubiquinone) biosynthesis.</text>
</comment>
<comment type="pathway">
    <text>Cofactor biosynthesis; ubiquinone biosynthesis [regulation].</text>
</comment>
<comment type="subcellular location">
    <subcellularLocation>
        <location evidence="1">Cell inner membrane</location>
        <topology evidence="1">Multi-pass membrane protein</topology>
    </subcellularLocation>
</comment>
<comment type="similarity">
    <text evidence="1">Belongs to the ABC1 family. UbiB subfamily.</text>
</comment>
<evidence type="ECO:0000255" key="1">
    <source>
        <dbReference type="HAMAP-Rule" id="MF_00414"/>
    </source>
</evidence>